<name>P4HTM_HUMAN</name>
<accession>Q9NXG6</accession>
<accession>Q6PAG6</accession>
<accession>Q8TCJ9</accession>
<accession>Q8WV55</accession>
<accession>Q96F22</accession>
<accession>Q9BW77</accession>
<gene>
    <name type="primary">P4HTM</name>
    <name type="synonym">PH4</name>
</gene>
<protein>
    <recommendedName>
        <fullName>Transmembrane prolyl 4-hydroxylase</fullName>
        <shortName>P4H-TM</shortName>
        <ecNumber evidence="7">1.14.11.29</ecNumber>
    </recommendedName>
    <alternativeName>
        <fullName>Hypoxia-inducible factor prolyl hydroxylase 4</fullName>
        <shortName>HIF-PH4</shortName>
        <shortName>HIF-prolyl hydroxylase 4</shortName>
        <shortName>HPH-4</shortName>
    </alternativeName>
</protein>
<comment type="function">
    <text evidence="7">Catalyzes the post-translational formation of 4-hydroxyproline in hypoxia-inducible factor (HIF) alpha proteins. Hydroxylates HIF1A at 'Pro-402' and 'Pro-564'. May function as a cellular oxygen sensor and, under normoxic conditions, may target HIF through the hydroxylation for proteasomal degradation via the von Hippel-Lindau ubiquitination complex.</text>
</comment>
<comment type="catalytic activity">
    <reaction evidence="7">
        <text>L-prolyl-[hypoxia-inducible factor alpha subunit] + 2-oxoglutarate + O2 = trans-4-hydroxy-L-prolyl-[hypoxia-inducible factor alpha subunit] + succinate + CO2</text>
        <dbReference type="Rhea" id="RHEA:48400"/>
        <dbReference type="Rhea" id="RHEA-COMP:12093"/>
        <dbReference type="Rhea" id="RHEA-COMP:12094"/>
        <dbReference type="ChEBI" id="CHEBI:15379"/>
        <dbReference type="ChEBI" id="CHEBI:16526"/>
        <dbReference type="ChEBI" id="CHEBI:16810"/>
        <dbReference type="ChEBI" id="CHEBI:30031"/>
        <dbReference type="ChEBI" id="CHEBI:50342"/>
        <dbReference type="ChEBI" id="CHEBI:61965"/>
        <dbReference type="EC" id="1.14.11.29"/>
    </reaction>
</comment>
<comment type="cofactor">
    <cofactor evidence="3">
        <name>Fe(2+)</name>
        <dbReference type="ChEBI" id="CHEBI:29033"/>
    </cofactor>
    <text evidence="3">Binds 1 Fe(2+) ion per subunit.</text>
</comment>
<comment type="cofactor">
    <cofactor evidence="1">
        <name>L-ascorbate</name>
        <dbReference type="ChEBI" id="CHEBI:38290"/>
    </cofactor>
</comment>
<comment type="subunit">
    <text evidence="7">Homodimer.</text>
</comment>
<comment type="subcellular location">
    <subcellularLocation>
        <location evidence="6 7">Endoplasmic reticulum membrane</location>
        <topology evidence="6 7">Single-pass type II membrane protein</topology>
    </subcellularLocation>
</comment>
<comment type="alternative products">
    <event type="alternative splicing"/>
    <isoform>
        <id>Q9NXG6-1</id>
        <name>1</name>
        <sequence type="displayed"/>
    </isoform>
    <isoform>
        <id>Q9NXG6-2</id>
        <name>2</name>
        <name>b</name>
        <sequence type="described" ref="VSP_007574"/>
    </isoform>
    <isoform>
        <id>Q9NXG6-3</id>
        <name>3</name>
        <sequence type="described" ref="VSP_007573"/>
    </isoform>
</comment>
<comment type="tissue specificity">
    <text evidence="6 7">Widely expressed with highest levels in adult pancreas, heart, skeletal muscle, brain, placenta, kidney and adrenal gland. Expressed at lower levels in epiphyseal cartilage and in fibroblasts.</text>
</comment>
<comment type="induction">
    <text evidence="7">By hypoxia in many cultured cell lines.</text>
</comment>
<comment type="PTM">
    <text evidence="7">Glycosylated.</text>
</comment>
<comment type="disease" evidence="8">
    <disease id="DI-05609">
        <name>Hypotonia, hyperventilation, impaired intellectual development, dysautonomia, epilepsy, and eye abnormalities</name>
        <acronym>HIDEA</acronym>
        <description>An autosomal recessive neurodevelopmental disorder characterized by global developmental delay, poor or absent speech, hypotonia, variable ocular movement and visual abnormalities, and respiratory difficulties. Disease onset is in infancy and death due to respiratory insufficiency may occur.</description>
        <dbReference type="MIM" id="618493"/>
    </disease>
    <text>The disease is caused by variants affecting the gene represented in this entry.</text>
</comment>
<comment type="sequence caution" evidence="11">
    <conflict type="miscellaneous discrepancy">
        <sequence resource="EMBL-CDS" id="AAH60321"/>
    </conflict>
    <text>Intron retention.</text>
</comment>
<comment type="sequence caution" evidence="11">
    <conflict type="erroneous initiation">
        <sequence resource="EMBL-CDS" id="BAA91045"/>
    </conflict>
</comment>
<comment type="sequence caution" evidence="11">
    <conflict type="miscellaneous discrepancy">
        <sequence resource="EMBL-CDS" id="CAD28518"/>
    </conflict>
    <text>Intron retention.</text>
</comment>
<feature type="chain" id="PRO_0000206668" description="Transmembrane prolyl 4-hydroxylase">
    <location>
        <begin position="1"/>
        <end position="502"/>
    </location>
</feature>
<feature type="topological domain" description="Cytoplasmic" evidence="2">
    <location>
        <begin position="1"/>
        <end position="60"/>
    </location>
</feature>
<feature type="transmembrane region" description="Helical; Signal-anchor for type II membrane protein" evidence="2">
    <location>
        <begin position="61"/>
        <end position="81"/>
    </location>
</feature>
<feature type="topological domain" description="Lumenal" evidence="2">
    <location>
        <begin position="82"/>
        <end position="502"/>
    </location>
</feature>
<feature type="domain" description="EF-hand 1">
    <location>
        <begin position="185"/>
        <end position="220"/>
    </location>
</feature>
<feature type="domain" description="EF-hand 2">
    <location>
        <begin position="224"/>
        <end position="259"/>
    </location>
</feature>
<feature type="domain" description="Fe2OG dioxygenase" evidence="3">
    <location>
        <begin position="310"/>
        <end position="460"/>
    </location>
</feature>
<feature type="region of interest" description="Disordered" evidence="5">
    <location>
        <begin position="1"/>
        <end position="29"/>
    </location>
</feature>
<feature type="region of interest" description="Disordered" evidence="5">
    <location>
        <begin position="89"/>
        <end position="111"/>
    </location>
</feature>
<feature type="binding site" evidence="4">
    <location>
        <position position="198"/>
    </location>
    <ligand>
        <name>Ca(2+)</name>
        <dbReference type="ChEBI" id="CHEBI:29108"/>
        <label>1</label>
    </ligand>
</feature>
<feature type="binding site" evidence="4">
    <location>
        <position position="200"/>
    </location>
    <ligand>
        <name>Ca(2+)</name>
        <dbReference type="ChEBI" id="CHEBI:29108"/>
        <label>1</label>
    </ligand>
</feature>
<feature type="binding site" evidence="4">
    <location>
        <position position="202"/>
    </location>
    <ligand>
        <name>Ca(2+)</name>
        <dbReference type="ChEBI" id="CHEBI:29108"/>
        <label>1</label>
    </ligand>
</feature>
<feature type="binding site" evidence="4">
    <location>
        <position position="204"/>
    </location>
    <ligand>
        <name>Ca(2+)</name>
        <dbReference type="ChEBI" id="CHEBI:29108"/>
        <label>1</label>
    </ligand>
</feature>
<feature type="binding site" evidence="4">
    <location>
        <position position="209"/>
    </location>
    <ligand>
        <name>Ca(2+)</name>
        <dbReference type="ChEBI" id="CHEBI:29108"/>
        <label>1</label>
    </ligand>
</feature>
<feature type="binding site" evidence="4">
    <location>
        <position position="237"/>
    </location>
    <ligand>
        <name>Ca(2+)</name>
        <dbReference type="ChEBI" id="CHEBI:29108"/>
        <label>2</label>
    </ligand>
</feature>
<feature type="binding site" evidence="4">
    <location>
        <position position="239"/>
    </location>
    <ligand>
        <name>Ca(2+)</name>
        <dbReference type="ChEBI" id="CHEBI:29108"/>
        <label>2</label>
    </ligand>
</feature>
<feature type="binding site" evidence="4">
    <location>
        <position position="241"/>
    </location>
    <ligand>
        <name>Ca(2+)</name>
        <dbReference type="ChEBI" id="CHEBI:29108"/>
        <label>2</label>
    </ligand>
</feature>
<feature type="binding site" evidence="4">
    <location>
        <position position="248"/>
    </location>
    <ligand>
        <name>Ca(2+)</name>
        <dbReference type="ChEBI" id="CHEBI:29108"/>
        <label>2</label>
    </ligand>
</feature>
<feature type="binding site" evidence="3">
    <location>
        <position position="328"/>
    </location>
    <ligand>
        <name>Fe cation</name>
        <dbReference type="ChEBI" id="CHEBI:24875"/>
    </ligand>
</feature>
<feature type="binding site" evidence="3">
    <location>
        <position position="330"/>
    </location>
    <ligand>
        <name>Fe cation</name>
        <dbReference type="ChEBI" id="CHEBI:24875"/>
    </ligand>
</feature>
<feature type="binding site" evidence="3">
    <location>
        <position position="374"/>
    </location>
    <ligand>
        <name>Fe cation</name>
        <dbReference type="ChEBI" id="CHEBI:24875"/>
    </ligand>
</feature>
<feature type="binding site" evidence="3">
    <location>
        <position position="451"/>
    </location>
    <ligand>
        <name>2-oxoglutarate</name>
        <dbReference type="ChEBI" id="CHEBI:16810"/>
    </ligand>
</feature>
<feature type="glycosylation site" description="N-linked (GlcNAc...) asparagine" evidence="2">
    <location>
        <position position="348"/>
    </location>
</feature>
<feature type="glycosylation site" description="N-linked (GlcNAc...) asparagine" evidence="2">
    <location>
        <position position="368"/>
    </location>
</feature>
<feature type="glycosylation site" description="N-linked (GlcNAc...) asparagine" evidence="2">
    <location>
        <position position="382"/>
    </location>
</feature>
<feature type="splice variant" id="VSP_007573" description="In isoform 3." evidence="10">
    <original>R</original>
    <variation>RQVSPNWGLPSILRPGTPMTQAQPCTVGVPLGMGPGDHWVIPVSPWEHPQLGTCSVPPLPYS</variation>
    <location>
        <position position="358"/>
    </location>
</feature>
<feature type="splice variant" id="VSP_007574" description="In isoform 2." evidence="9 10">
    <original>YMTVLFYLNNVTGGGETVFPVADNRTYDEMSLIQDDVDLRDTRRHCDKGNLRVKPQQGTAVFWYNYLPDGQGWVGDVDDYSLHGGCLVTRGTKWIANNWINVDPSRARQALFQQEMARLAREGGTDSQPEWALDRAYRDARVEL</original>
    <variation>QVSPNWGLPSILRPGTPMTQAQPCTVGVPLGMGPGDHWVIPVSDALTSPHKLFTQWLERGGYWSS</variation>
    <location>
        <begin position="359"/>
        <end position="502"/>
    </location>
</feature>
<feature type="sequence variant" id="VAR_082950" description="In HIDEA; dbSNP:rs1576606484." evidence="8">
    <original>H</original>
    <variation>P</variation>
    <location>
        <position position="161"/>
    </location>
</feature>
<feature type="sequence variant" id="VAR_082951" description="In HIDEA; uncertain significance." evidence="8">
    <location>
        <begin position="471"/>
        <end position="502"/>
    </location>
</feature>
<feature type="sequence conflict" description="In Ref. 3; AAH47566." evidence="11" ref="3">
    <original>Q</original>
    <variation>K</variation>
    <location>
        <position position="213"/>
    </location>
</feature>
<feature type="sequence conflict" description="In Ref. 1; AAO43431." evidence="11" ref="1">
    <original>G</original>
    <variation>A</variation>
    <location>
        <position position="240"/>
    </location>
</feature>
<feature type="strand" evidence="12">
    <location>
        <begin position="122"/>
        <end position="125"/>
    </location>
</feature>
<feature type="strand" evidence="12">
    <location>
        <begin position="127"/>
        <end position="131"/>
    </location>
</feature>
<feature type="strand" evidence="12">
    <location>
        <begin position="133"/>
        <end position="139"/>
    </location>
</feature>
<feature type="turn" evidence="12">
    <location>
        <begin position="140"/>
        <end position="143"/>
    </location>
</feature>
<feature type="strand" evidence="12">
    <location>
        <begin position="144"/>
        <end position="147"/>
    </location>
</feature>
<feature type="helix" evidence="12">
    <location>
        <begin position="153"/>
        <end position="166"/>
    </location>
</feature>
<feature type="strand" evidence="12">
    <location>
        <begin position="169"/>
        <end position="172"/>
    </location>
</feature>
<feature type="helix" evidence="12">
    <location>
        <begin position="190"/>
        <end position="197"/>
    </location>
</feature>
<feature type="strand" evidence="12">
    <location>
        <begin position="202"/>
        <end position="205"/>
    </location>
</feature>
<feature type="helix" evidence="12">
    <location>
        <begin position="207"/>
        <end position="211"/>
    </location>
</feature>
<feature type="helix" evidence="12">
    <location>
        <begin position="214"/>
        <end position="217"/>
    </location>
</feature>
<feature type="helix" evidence="12">
    <location>
        <begin position="224"/>
        <end position="233"/>
    </location>
</feature>
<feature type="helix" evidence="12">
    <location>
        <begin position="246"/>
        <end position="250"/>
    </location>
</feature>
<feature type="helix" evidence="12">
    <location>
        <begin position="254"/>
        <end position="263"/>
    </location>
</feature>
<feature type="helix" evidence="12">
    <location>
        <begin position="268"/>
        <end position="270"/>
    </location>
</feature>
<feature type="strand" evidence="12">
    <location>
        <begin position="271"/>
        <end position="274"/>
    </location>
</feature>
<feature type="strand" evidence="12">
    <location>
        <begin position="276"/>
        <end position="280"/>
    </location>
</feature>
<feature type="helix" evidence="12">
    <location>
        <begin position="288"/>
        <end position="301"/>
    </location>
</feature>
<feature type="helix" evidence="12">
    <location>
        <begin position="305"/>
        <end position="309"/>
    </location>
</feature>
<feature type="strand" evidence="12">
    <location>
        <begin position="314"/>
        <end position="319"/>
    </location>
</feature>
<feature type="strand" evidence="12">
    <location>
        <begin position="324"/>
        <end position="328"/>
    </location>
</feature>
<feature type="turn" evidence="12">
    <location>
        <begin position="341"/>
        <end position="343"/>
    </location>
</feature>
<feature type="strand" evidence="12">
    <location>
        <begin position="345"/>
        <end position="348"/>
    </location>
</feature>
<feature type="strand" evidence="12">
    <location>
        <begin position="358"/>
        <end position="365"/>
    </location>
</feature>
<feature type="strand" evidence="12">
    <location>
        <begin position="370"/>
        <end position="372"/>
    </location>
</feature>
<feature type="strand" evidence="12">
    <location>
        <begin position="375"/>
        <end position="377"/>
    </location>
</feature>
<feature type="turn" evidence="12">
    <location>
        <begin position="378"/>
        <end position="381"/>
    </location>
</feature>
<feature type="helix" evidence="12">
    <location>
        <begin position="387"/>
        <end position="390"/>
    </location>
</feature>
<feature type="turn" evidence="12">
    <location>
        <begin position="400"/>
        <end position="402"/>
    </location>
</feature>
<feature type="helix" evidence="12">
    <location>
        <begin position="404"/>
        <end position="406"/>
    </location>
</feature>
<feature type="strand" evidence="12">
    <location>
        <begin position="407"/>
        <end position="411"/>
    </location>
</feature>
<feature type="strand" evidence="12">
    <location>
        <begin position="418"/>
        <end position="426"/>
    </location>
</feature>
<feature type="strand" evidence="12">
    <location>
        <begin position="428"/>
        <end position="435"/>
    </location>
</feature>
<feature type="helix" evidence="12">
    <location>
        <begin position="437"/>
        <end position="439"/>
    </location>
</feature>
<feature type="strand" evidence="12">
    <location>
        <begin position="441"/>
        <end position="443"/>
    </location>
</feature>
<feature type="strand" evidence="12">
    <location>
        <begin position="446"/>
        <end position="449"/>
    </location>
</feature>
<feature type="strand" evidence="12">
    <location>
        <begin position="451"/>
        <end position="459"/>
    </location>
</feature>
<feature type="helix" evidence="12">
    <location>
        <begin position="464"/>
        <end position="480"/>
    </location>
</feature>
<keyword id="KW-0002">3D-structure</keyword>
<keyword id="KW-0025">Alternative splicing</keyword>
<keyword id="KW-0106">Calcium</keyword>
<keyword id="KW-0223">Dioxygenase</keyword>
<keyword id="KW-0225">Disease variant</keyword>
<keyword id="KW-0256">Endoplasmic reticulum</keyword>
<keyword id="KW-0887">Epilepsy</keyword>
<keyword id="KW-0325">Glycoprotein</keyword>
<keyword id="KW-0991">Intellectual disability</keyword>
<keyword id="KW-0408">Iron</keyword>
<keyword id="KW-0472">Membrane</keyword>
<keyword id="KW-0479">Metal-binding</keyword>
<keyword id="KW-0560">Oxidoreductase</keyword>
<keyword id="KW-1267">Proteomics identification</keyword>
<keyword id="KW-1185">Reference proteome</keyword>
<keyword id="KW-0677">Repeat</keyword>
<keyword id="KW-0735">Signal-anchor</keyword>
<keyword id="KW-0812">Transmembrane</keyword>
<keyword id="KW-1133">Transmembrane helix</keyword>
<keyword id="KW-0847">Vitamin C</keyword>
<sequence length="502" mass="56661">MAAAAVTGQRPETAAAEEASRPQWAPPDHCQAQAAAGLGDGEDAPVRPLCKPRGICSRAYFLVLMVFVHLYLGNVLALLLFVHYSNGDESSDPGPQHRAQGPGPEPTLGPLTRLEGIKVGHERKVQLVTDRDHFIRTLSLKPLLFEIPGFLTDEECRLIIHLAQMKGLQRSQILPTEEYEEAMSTMQVSQLDLFRLLDQNRDGHLQLREVLAQTRLGNGWWMTPESIQEMYAAIKADPDGDGVLSLQEFSNMDLRDFHKYMRSHKAESSELVRNSHHTWLYQGEGAHHIMRAIRQRVLRLTRLSPEIVELSEPLQVVRYGEGGHYHAHVDSGPVYPETICSHTKLVANESVPFETSCRYMTVLFYLNNVTGGGETVFPVADNRTYDEMSLIQDDVDLRDTRRHCDKGNLRVKPQQGTAVFWYNYLPDGQGWVGDVDDYSLHGGCLVTRGTKWIANNWINVDPSRARQALFQQEMARLAREGGTDSQPEWALDRAYRDARVEL</sequence>
<organism>
    <name type="scientific">Homo sapiens</name>
    <name type="common">Human</name>
    <dbReference type="NCBI Taxonomy" id="9606"/>
    <lineage>
        <taxon>Eukaryota</taxon>
        <taxon>Metazoa</taxon>
        <taxon>Chordata</taxon>
        <taxon>Craniata</taxon>
        <taxon>Vertebrata</taxon>
        <taxon>Euteleostomi</taxon>
        <taxon>Mammalia</taxon>
        <taxon>Eutheria</taxon>
        <taxon>Euarchontoglires</taxon>
        <taxon>Primates</taxon>
        <taxon>Haplorrhini</taxon>
        <taxon>Catarrhini</taxon>
        <taxon>Hominidae</taxon>
        <taxon>Homo</taxon>
    </lineage>
</organism>
<reference key="1">
    <citation type="journal article" date="2002" name="Biochem. Biophys. Res. Commun.">
        <title>Overexpression of PH-4, a novel putative proline 4-hydroxylase, modulates activity of hypoxia-inducible transcription factors.</title>
        <authorList>
            <person name="Oehme F."/>
            <person name="Ellinghaus P."/>
            <person name="Kolkhof P."/>
            <person name="Smith T.J."/>
            <person name="Ramakrishnan S."/>
            <person name="Huetter J."/>
            <person name="Schramm M."/>
            <person name="Flamme I."/>
        </authorList>
    </citation>
    <scope>NUCLEOTIDE SEQUENCE [MRNA] (ISOFORM 1)</scope>
    <scope>SUBCELLULAR LOCATION</scope>
    <scope>TISSUE SPECIFICITY</scope>
</reference>
<reference key="2">
    <citation type="journal article" date="2007" name="BMC Genomics">
        <title>The full-ORF clone resource of the German cDNA consortium.</title>
        <authorList>
            <person name="Bechtel S."/>
            <person name="Rosenfelder H."/>
            <person name="Duda A."/>
            <person name="Schmidt C.P."/>
            <person name="Ernst U."/>
            <person name="Wellenreuther R."/>
            <person name="Mehrle A."/>
            <person name="Schuster C."/>
            <person name="Bahr A."/>
            <person name="Bloecker H."/>
            <person name="Heubner D."/>
            <person name="Hoerlein A."/>
            <person name="Michel G."/>
            <person name="Wedler H."/>
            <person name="Koehrer K."/>
            <person name="Ottenwaelder B."/>
            <person name="Poustka A."/>
            <person name="Wiemann S."/>
            <person name="Schupp I."/>
        </authorList>
    </citation>
    <scope>NUCLEOTIDE SEQUENCE [LARGE SCALE MRNA] (ISOFORM 1)</scope>
    <source>
        <tissue>Uterus</tissue>
    </source>
</reference>
<reference key="3">
    <citation type="journal article" date="2004" name="Genome Res.">
        <title>The status, quality, and expansion of the NIH full-length cDNA project: the Mammalian Gene Collection (MGC).</title>
        <authorList>
            <consortium name="The MGC Project Team"/>
        </authorList>
    </citation>
    <scope>NUCLEOTIDE SEQUENCE [LARGE SCALE MRNA] (ISOFORMS 2 AND 3)</scope>
    <scope>NUCLEOTIDE SEQUENCE [LARGE SCALE MRNA] OF 166-502 (ISOFORM 1)</scope>
    <source>
        <tissue>Duodenum</tissue>
        <tissue>Hippocampus</tissue>
        <tissue>Lung</tissue>
    </source>
</reference>
<reference key="4">
    <citation type="journal article" date="2004" name="Nat. Genet.">
        <title>Complete sequencing and characterization of 21,243 full-length human cDNAs.</title>
        <authorList>
            <person name="Ota T."/>
            <person name="Suzuki Y."/>
            <person name="Nishikawa T."/>
            <person name="Otsuki T."/>
            <person name="Sugiyama T."/>
            <person name="Irie R."/>
            <person name="Wakamatsu A."/>
            <person name="Hayashi K."/>
            <person name="Sato H."/>
            <person name="Nagai K."/>
            <person name="Kimura K."/>
            <person name="Makita H."/>
            <person name="Sekine M."/>
            <person name="Obayashi M."/>
            <person name="Nishi T."/>
            <person name="Shibahara T."/>
            <person name="Tanaka T."/>
            <person name="Ishii S."/>
            <person name="Yamamoto J."/>
            <person name="Saito K."/>
            <person name="Kawai Y."/>
            <person name="Isono Y."/>
            <person name="Nakamura Y."/>
            <person name="Nagahari K."/>
            <person name="Murakami K."/>
            <person name="Yasuda T."/>
            <person name="Iwayanagi T."/>
            <person name="Wagatsuma M."/>
            <person name="Shiratori A."/>
            <person name="Sudo H."/>
            <person name="Hosoiri T."/>
            <person name="Kaku Y."/>
            <person name="Kodaira H."/>
            <person name="Kondo H."/>
            <person name="Sugawara M."/>
            <person name="Takahashi M."/>
            <person name="Kanda K."/>
            <person name="Yokoi T."/>
            <person name="Furuya T."/>
            <person name="Kikkawa E."/>
            <person name="Omura Y."/>
            <person name="Abe K."/>
            <person name="Kamihara K."/>
            <person name="Katsuta N."/>
            <person name="Sato K."/>
            <person name="Tanikawa M."/>
            <person name="Yamazaki M."/>
            <person name="Ninomiya K."/>
            <person name="Ishibashi T."/>
            <person name="Yamashita H."/>
            <person name="Murakawa K."/>
            <person name="Fujimori K."/>
            <person name="Tanai H."/>
            <person name="Kimata M."/>
            <person name="Watanabe M."/>
            <person name="Hiraoka S."/>
            <person name="Chiba Y."/>
            <person name="Ishida S."/>
            <person name="Ono Y."/>
            <person name="Takiguchi S."/>
            <person name="Watanabe S."/>
            <person name="Yosida M."/>
            <person name="Hotuta T."/>
            <person name="Kusano J."/>
            <person name="Kanehori K."/>
            <person name="Takahashi-Fujii A."/>
            <person name="Hara H."/>
            <person name="Tanase T.-O."/>
            <person name="Nomura Y."/>
            <person name="Togiya S."/>
            <person name="Komai F."/>
            <person name="Hara R."/>
            <person name="Takeuchi K."/>
            <person name="Arita M."/>
            <person name="Imose N."/>
            <person name="Musashino K."/>
            <person name="Yuuki H."/>
            <person name="Oshima A."/>
            <person name="Sasaki N."/>
            <person name="Aotsuka S."/>
            <person name="Yoshikawa Y."/>
            <person name="Matsunawa H."/>
            <person name="Ichihara T."/>
            <person name="Shiohata N."/>
            <person name="Sano S."/>
            <person name="Moriya S."/>
            <person name="Momiyama H."/>
            <person name="Satoh N."/>
            <person name="Takami S."/>
            <person name="Terashima Y."/>
            <person name="Suzuki O."/>
            <person name="Nakagawa S."/>
            <person name="Senoh A."/>
            <person name="Mizoguchi H."/>
            <person name="Goto Y."/>
            <person name="Shimizu F."/>
            <person name="Wakebe H."/>
            <person name="Hishigaki H."/>
            <person name="Watanabe T."/>
            <person name="Sugiyama A."/>
            <person name="Takemoto M."/>
            <person name="Kawakami B."/>
            <person name="Yamazaki M."/>
            <person name="Watanabe K."/>
            <person name="Kumagai A."/>
            <person name="Itakura S."/>
            <person name="Fukuzumi Y."/>
            <person name="Fujimori Y."/>
            <person name="Komiyama M."/>
            <person name="Tashiro H."/>
            <person name="Tanigami A."/>
            <person name="Fujiwara T."/>
            <person name="Ono T."/>
            <person name="Yamada K."/>
            <person name="Fujii Y."/>
            <person name="Ozaki K."/>
            <person name="Hirao M."/>
            <person name="Ohmori Y."/>
            <person name="Kawabata A."/>
            <person name="Hikiji T."/>
            <person name="Kobatake N."/>
            <person name="Inagaki H."/>
            <person name="Ikema Y."/>
            <person name="Okamoto S."/>
            <person name="Okitani R."/>
            <person name="Kawakami T."/>
            <person name="Noguchi S."/>
            <person name="Itoh T."/>
            <person name="Shigeta K."/>
            <person name="Senba T."/>
            <person name="Matsumura K."/>
            <person name="Nakajima Y."/>
            <person name="Mizuno T."/>
            <person name="Morinaga M."/>
            <person name="Sasaki M."/>
            <person name="Togashi T."/>
            <person name="Oyama M."/>
            <person name="Hata H."/>
            <person name="Watanabe M."/>
            <person name="Komatsu T."/>
            <person name="Mizushima-Sugano J."/>
            <person name="Satoh T."/>
            <person name="Shirai Y."/>
            <person name="Takahashi Y."/>
            <person name="Nakagawa K."/>
            <person name="Okumura K."/>
            <person name="Nagase T."/>
            <person name="Nomura N."/>
            <person name="Kikuchi H."/>
            <person name="Masuho Y."/>
            <person name="Yamashita R."/>
            <person name="Nakai K."/>
            <person name="Yada T."/>
            <person name="Nakamura Y."/>
            <person name="Ohara O."/>
            <person name="Isogai T."/>
            <person name="Sugano S."/>
        </authorList>
    </citation>
    <scope>NUCLEOTIDE SEQUENCE [LARGE SCALE MRNA] OF 84-502 (ISOFORM 2)</scope>
    <source>
        <tissue>Colon mucosa</tissue>
    </source>
</reference>
<reference key="5">
    <citation type="journal article" date="2007" name="J. Biol. Chem.">
        <title>An endoplasmic reticulum transmembrane prolyl 4-hydroxylase is induced by hypoxia and acts on hypoxia-inducible factor alpha.</title>
        <authorList>
            <person name="Koivunen P."/>
            <person name="Tiainen P."/>
            <person name="Hyvaerinen J."/>
            <person name="Williams K.E."/>
            <person name="Sormunen R."/>
            <person name="Klaus S.J."/>
            <person name="Kivirikko K.I."/>
            <person name="Myllyharju J."/>
        </authorList>
    </citation>
    <scope>FUNCTION</scope>
    <scope>CATALYTIC ACTIVITY</scope>
    <scope>SUBUNIT</scope>
    <scope>SUBCELLULAR LOCATION</scope>
    <scope>TISSUE SPECIFICITY</scope>
    <scope>INDUCTION</scope>
    <scope>TOPOLOGY</scope>
    <scope>GLYCOSYLATION</scope>
</reference>
<reference key="6">
    <citation type="journal article" date="2019" name="Genet. Med.">
        <title>Biallelic loss-of-function P4HTM gene variants cause hypotonia, hypoventilation, intellectual disability, dysautonomia, epilepsy, and eye abnormalities (HIDEA syndrome).</title>
        <authorList>
            <person name="Rahikkala E."/>
            <person name="Myllykoski M."/>
            <person name="Hinttala R."/>
            <person name="Vieira P."/>
            <person name="Nayebzadeh N."/>
            <person name="Weiss S."/>
            <person name="Plomp A.S."/>
            <person name="Bittner R.E."/>
            <person name="Kurki M.I."/>
            <person name="Kuismin O."/>
            <person name="Lewis A.M."/>
            <person name="Vaeisaenen M.L."/>
            <person name="Kokkonen H."/>
            <person name="Westermann J."/>
            <person name="Bernert G."/>
            <person name="Tuominen H."/>
            <person name="Palotie A."/>
            <person name="Aaltonen L."/>
            <person name="Yang Y."/>
            <person name="Potocki L."/>
            <person name="Moilanen J."/>
            <person name="van Koningsbruggen S."/>
            <person name="Wang X."/>
            <person name="Schmidt W.M."/>
            <person name="Koivunen P."/>
            <person name="Uusimaa J."/>
        </authorList>
    </citation>
    <scope>INVOLVEMENT IN HIDEA</scope>
    <scope>VARIANTS HIDEA PRO-161 AND 471-GLN--LEU-502 DEL</scope>
</reference>
<dbReference type="EC" id="1.14.11.29" evidence="7"/>
<dbReference type="EMBL" id="AY198406">
    <property type="protein sequence ID" value="AAO43431.1"/>
    <property type="molecule type" value="mRNA"/>
</dbReference>
<dbReference type="EMBL" id="AL713728">
    <property type="protein sequence ID" value="CAD28518.2"/>
    <property type="status" value="ALT_SEQ"/>
    <property type="molecule type" value="mRNA"/>
</dbReference>
<dbReference type="EMBL" id="BC000580">
    <property type="protein sequence ID" value="AAH00580.1"/>
    <property type="molecule type" value="mRNA"/>
</dbReference>
<dbReference type="EMBL" id="BC011710">
    <property type="protein sequence ID" value="AAH11710.3"/>
    <property type="molecule type" value="mRNA"/>
</dbReference>
<dbReference type="EMBL" id="BC047566">
    <property type="protein sequence ID" value="AAH47566.1"/>
    <property type="molecule type" value="mRNA"/>
</dbReference>
<dbReference type="EMBL" id="BC060321">
    <property type="protein sequence ID" value="AAH60321.1"/>
    <property type="status" value="ALT_SEQ"/>
    <property type="molecule type" value="mRNA"/>
</dbReference>
<dbReference type="EMBL" id="AK000269">
    <property type="protein sequence ID" value="BAA91045.1"/>
    <property type="status" value="ALT_INIT"/>
    <property type="molecule type" value="mRNA"/>
</dbReference>
<dbReference type="CCDS" id="CCDS2781.2">
    <molecule id="Q9NXG6-3"/>
</dbReference>
<dbReference type="CCDS" id="CCDS43089.1">
    <molecule id="Q9NXG6-1"/>
</dbReference>
<dbReference type="RefSeq" id="NP_808807.2">
    <molecule id="Q9NXG6-3"/>
    <property type="nucleotide sequence ID" value="NM_177938.2"/>
</dbReference>
<dbReference type="RefSeq" id="NP_808808.1">
    <molecule id="Q9NXG6-1"/>
    <property type="nucleotide sequence ID" value="NM_177939.3"/>
</dbReference>
<dbReference type="PDB" id="6TP5">
    <property type="method" value="X-ray"/>
    <property type="resolution" value="2.25 A"/>
    <property type="chains" value="A/B=88-502"/>
</dbReference>
<dbReference type="PDBsum" id="6TP5"/>
<dbReference type="SMR" id="Q9NXG6"/>
<dbReference type="BioGRID" id="120100">
    <property type="interactions" value="135"/>
</dbReference>
<dbReference type="FunCoup" id="Q9NXG6">
    <property type="interactions" value="402"/>
</dbReference>
<dbReference type="IntAct" id="Q9NXG6">
    <property type="interactions" value="27"/>
</dbReference>
<dbReference type="MINT" id="Q9NXG6"/>
<dbReference type="STRING" id="9606.ENSP00000341422"/>
<dbReference type="BindingDB" id="Q9NXG6"/>
<dbReference type="ChEMBL" id="CHEMBL3047"/>
<dbReference type="DrugBank" id="DB00126">
    <property type="generic name" value="Ascorbic acid"/>
</dbReference>
<dbReference type="GlyCosmos" id="Q9NXG6">
    <property type="glycosylation" value="4 sites, 1 glycan"/>
</dbReference>
<dbReference type="GlyGen" id="Q9NXG6">
    <property type="glycosylation" value="6 sites, 8 N-linked glycans (2 sites), 3 O-linked glycans (3 sites)"/>
</dbReference>
<dbReference type="iPTMnet" id="Q9NXG6"/>
<dbReference type="MetOSite" id="Q9NXG6"/>
<dbReference type="PhosphoSitePlus" id="Q9NXG6"/>
<dbReference type="SwissPalm" id="Q9NXG6"/>
<dbReference type="BioMuta" id="P4HTM"/>
<dbReference type="DMDM" id="32129516"/>
<dbReference type="jPOST" id="Q9NXG6"/>
<dbReference type="MassIVE" id="Q9NXG6"/>
<dbReference type="PeptideAtlas" id="Q9NXG6"/>
<dbReference type="ProteomicsDB" id="83095">
    <molecule id="Q9NXG6-1"/>
</dbReference>
<dbReference type="ProteomicsDB" id="83096">
    <molecule id="Q9NXG6-2"/>
</dbReference>
<dbReference type="ProteomicsDB" id="83097">
    <molecule id="Q9NXG6-3"/>
</dbReference>
<dbReference type="Pumba" id="Q9NXG6"/>
<dbReference type="Antibodypedia" id="2007">
    <property type="antibodies" value="230 antibodies from 24 providers"/>
</dbReference>
<dbReference type="DNASU" id="54681"/>
<dbReference type="Ensembl" id="ENST00000343546.8">
    <molecule id="Q9NXG6-3"/>
    <property type="protein sequence ID" value="ENSP00000341422.4"/>
    <property type="gene ID" value="ENSG00000178467.18"/>
</dbReference>
<dbReference type="Ensembl" id="ENST00000383729.9">
    <molecule id="Q9NXG6-1"/>
    <property type="protein sequence ID" value="ENSP00000373235.4"/>
    <property type="gene ID" value="ENSG00000178467.18"/>
</dbReference>
<dbReference type="GeneID" id="54681"/>
<dbReference type="KEGG" id="hsa:54681"/>
<dbReference type="MANE-Select" id="ENST00000383729.9">
    <property type="protein sequence ID" value="ENSP00000373235.4"/>
    <property type="RefSeq nucleotide sequence ID" value="NM_177939.3"/>
    <property type="RefSeq protein sequence ID" value="NP_808808.1"/>
</dbReference>
<dbReference type="UCSC" id="uc003cvg.4">
    <molecule id="Q9NXG6-1"/>
    <property type="organism name" value="human"/>
</dbReference>
<dbReference type="AGR" id="HGNC:28858"/>
<dbReference type="CTD" id="54681"/>
<dbReference type="DisGeNET" id="54681"/>
<dbReference type="GeneCards" id="P4HTM"/>
<dbReference type="HGNC" id="HGNC:28858">
    <property type="gene designation" value="P4HTM"/>
</dbReference>
<dbReference type="HPA" id="ENSG00000178467">
    <property type="expression patterns" value="Tissue enhanced (choroid)"/>
</dbReference>
<dbReference type="MalaCards" id="P4HTM"/>
<dbReference type="MIM" id="614584">
    <property type="type" value="gene"/>
</dbReference>
<dbReference type="MIM" id="618493">
    <property type="type" value="phenotype"/>
</dbReference>
<dbReference type="neXtProt" id="NX_Q9NXG6"/>
<dbReference type="OpenTargets" id="ENSG00000178467"/>
<dbReference type="Orphanet" id="436141">
    <property type="disease" value="HIDEA syndrome"/>
</dbReference>
<dbReference type="PharmGKB" id="PA164724295"/>
<dbReference type="VEuPathDB" id="HostDB:ENSG00000178467"/>
<dbReference type="eggNOG" id="KOG1591">
    <property type="taxonomic scope" value="Eukaryota"/>
</dbReference>
<dbReference type="GeneTree" id="ENSGT00390000014570"/>
<dbReference type="HOGENOM" id="CLU_035319_0_0_1"/>
<dbReference type="InParanoid" id="Q9NXG6"/>
<dbReference type="OMA" id="MTQAQPC"/>
<dbReference type="OrthoDB" id="420380at2759"/>
<dbReference type="PAN-GO" id="Q9NXG6">
    <property type="GO annotations" value="3 GO annotations based on evolutionary models"/>
</dbReference>
<dbReference type="PhylomeDB" id="Q9NXG6"/>
<dbReference type="TreeFam" id="TF332923"/>
<dbReference type="PathwayCommons" id="Q9NXG6"/>
<dbReference type="SignaLink" id="Q9NXG6"/>
<dbReference type="BioGRID-ORCS" id="54681">
    <property type="hits" value="9 hits in 1147 CRISPR screens"/>
</dbReference>
<dbReference type="ChiTaRS" id="P4HTM">
    <property type="organism name" value="human"/>
</dbReference>
<dbReference type="GenomeRNAi" id="54681"/>
<dbReference type="Pharos" id="Q9NXG6">
    <property type="development level" value="Tchem"/>
</dbReference>
<dbReference type="PRO" id="PR:Q9NXG6"/>
<dbReference type="Proteomes" id="UP000005640">
    <property type="component" value="Chromosome 3"/>
</dbReference>
<dbReference type="RNAct" id="Q9NXG6">
    <property type="molecule type" value="protein"/>
</dbReference>
<dbReference type="Bgee" id="ENSG00000178467">
    <property type="expression patterns" value="Expressed in right uterine tube and 191 other cell types or tissues"/>
</dbReference>
<dbReference type="ExpressionAtlas" id="Q9NXG6">
    <property type="expression patterns" value="baseline and differential"/>
</dbReference>
<dbReference type="GO" id="GO:0005783">
    <property type="term" value="C:endoplasmic reticulum"/>
    <property type="evidence" value="ECO:0000318"/>
    <property type="project" value="GO_Central"/>
</dbReference>
<dbReference type="GO" id="GO:0005789">
    <property type="term" value="C:endoplasmic reticulum membrane"/>
    <property type="evidence" value="ECO:0007669"/>
    <property type="project" value="UniProtKB-SubCell"/>
</dbReference>
<dbReference type="GO" id="GO:0016706">
    <property type="term" value="F:2-oxoglutarate-dependent dioxygenase activity"/>
    <property type="evidence" value="ECO:0000314"/>
    <property type="project" value="MGI"/>
</dbReference>
<dbReference type="GO" id="GO:0005509">
    <property type="term" value="F:calcium ion binding"/>
    <property type="evidence" value="ECO:0007669"/>
    <property type="project" value="InterPro"/>
</dbReference>
<dbReference type="GO" id="GO:0160082">
    <property type="term" value="F:hypoxia-inducible factor-proline dioxygenase activity"/>
    <property type="evidence" value="ECO:0007669"/>
    <property type="project" value="UniProtKB-EC"/>
</dbReference>
<dbReference type="GO" id="GO:0005506">
    <property type="term" value="F:iron ion binding"/>
    <property type="evidence" value="ECO:0007669"/>
    <property type="project" value="InterPro"/>
</dbReference>
<dbReference type="GO" id="GO:0031418">
    <property type="term" value="F:L-ascorbic acid binding"/>
    <property type="evidence" value="ECO:0007669"/>
    <property type="project" value="UniProtKB-KW"/>
</dbReference>
<dbReference type="GO" id="GO:0004656">
    <property type="term" value="F:procollagen-proline 4-dioxygenase activity"/>
    <property type="evidence" value="ECO:0000318"/>
    <property type="project" value="GO_Central"/>
</dbReference>
<dbReference type="GO" id="GO:0045646">
    <property type="term" value="P:regulation of erythrocyte differentiation"/>
    <property type="evidence" value="ECO:0000318"/>
    <property type="project" value="GO_Central"/>
</dbReference>
<dbReference type="CDD" id="cd00051">
    <property type="entry name" value="EFh"/>
    <property type="match status" value="1"/>
</dbReference>
<dbReference type="FunFam" id="1.10.238.10:FF:000141">
    <property type="entry name" value="transmembrane prolyl 4-hydroxylase"/>
    <property type="match status" value="1"/>
</dbReference>
<dbReference type="FunFam" id="2.60.120.620:FF:000008">
    <property type="entry name" value="transmembrane prolyl 4-hydroxylase"/>
    <property type="match status" value="1"/>
</dbReference>
<dbReference type="Gene3D" id="1.10.238.10">
    <property type="entry name" value="EF-hand"/>
    <property type="match status" value="1"/>
</dbReference>
<dbReference type="Gene3D" id="2.60.120.620">
    <property type="entry name" value="q2cbj1_9rhob like domain"/>
    <property type="match status" value="1"/>
</dbReference>
<dbReference type="InterPro" id="IPR011992">
    <property type="entry name" value="EF-hand-dom_pair"/>
</dbReference>
<dbReference type="InterPro" id="IPR018247">
    <property type="entry name" value="EF_Hand_1_Ca_BS"/>
</dbReference>
<dbReference type="InterPro" id="IPR002048">
    <property type="entry name" value="EF_hand_dom"/>
</dbReference>
<dbReference type="InterPro" id="IPR005123">
    <property type="entry name" value="Oxoglu/Fe-dep_dioxygenase_dom"/>
</dbReference>
<dbReference type="InterPro" id="IPR045054">
    <property type="entry name" value="P4HA-like"/>
</dbReference>
<dbReference type="InterPro" id="IPR006620">
    <property type="entry name" value="Pro_4_hyd_alph"/>
</dbReference>
<dbReference type="InterPro" id="IPR044862">
    <property type="entry name" value="Pro_4_hyd_alph_FE2OG_OXY"/>
</dbReference>
<dbReference type="PANTHER" id="PTHR10869">
    <property type="entry name" value="PROLYL 4-HYDROXYLASE ALPHA SUBUNIT"/>
    <property type="match status" value="1"/>
</dbReference>
<dbReference type="PANTHER" id="PTHR10869:SF246">
    <property type="entry name" value="TRANSMEMBRANE PROLYL 4-HYDROXYLASE"/>
    <property type="match status" value="1"/>
</dbReference>
<dbReference type="Pfam" id="PF13640">
    <property type="entry name" value="2OG-FeII_Oxy_3"/>
    <property type="match status" value="1"/>
</dbReference>
<dbReference type="Pfam" id="PF13499">
    <property type="entry name" value="EF-hand_7"/>
    <property type="match status" value="1"/>
</dbReference>
<dbReference type="SMART" id="SM00702">
    <property type="entry name" value="P4Hc"/>
    <property type="match status" value="1"/>
</dbReference>
<dbReference type="SUPFAM" id="SSF47473">
    <property type="entry name" value="EF-hand"/>
    <property type="match status" value="1"/>
</dbReference>
<dbReference type="PROSITE" id="PS00018">
    <property type="entry name" value="EF_HAND_1"/>
    <property type="match status" value="2"/>
</dbReference>
<dbReference type="PROSITE" id="PS51471">
    <property type="entry name" value="FE2OG_OXY"/>
    <property type="match status" value="1"/>
</dbReference>
<evidence type="ECO:0000250" key="1"/>
<evidence type="ECO:0000255" key="2"/>
<evidence type="ECO:0000255" key="3">
    <source>
        <dbReference type="PROSITE-ProRule" id="PRU00805"/>
    </source>
</evidence>
<evidence type="ECO:0000255" key="4">
    <source>
        <dbReference type="PROSITE-ProRule" id="PRU10142"/>
    </source>
</evidence>
<evidence type="ECO:0000256" key="5">
    <source>
        <dbReference type="SAM" id="MobiDB-lite"/>
    </source>
</evidence>
<evidence type="ECO:0000269" key="6">
    <source>
    </source>
</evidence>
<evidence type="ECO:0000269" key="7">
    <source>
    </source>
</evidence>
<evidence type="ECO:0000269" key="8">
    <source>
    </source>
</evidence>
<evidence type="ECO:0000303" key="9">
    <source>
    </source>
</evidence>
<evidence type="ECO:0000303" key="10">
    <source>
    </source>
</evidence>
<evidence type="ECO:0000305" key="11"/>
<evidence type="ECO:0007829" key="12">
    <source>
        <dbReference type="PDB" id="6TP5"/>
    </source>
</evidence>
<proteinExistence type="evidence at protein level"/>